<name>DNCH_SYNP6</name>
<feature type="chain" id="PRO_0000377028" description="1,4-dihydroxy-2-naphthoyl-CoA hydrolase">
    <location>
        <begin position="1"/>
        <end position="136"/>
    </location>
</feature>
<feature type="active site" evidence="1">
    <location>
        <position position="16"/>
    </location>
</feature>
<comment type="function">
    <text evidence="1">Catalyzes the hydrolysis of 1,4-dihydroxy-2-naphthoyl-CoA (DHNA-CoA) to 1,4-dihydroxy-2-naphthoate (DHNA), a reaction involved in phylloquinone (vitamin K1) biosynthesis.</text>
</comment>
<comment type="catalytic activity">
    <reaction evidence="1">
        <text>1,4-dihydroxy-2-naphthoyl-CoA + H2O = 1,4-dihydroxy-2-naphthoate + CoA + H(+)</text>
        <dbReference type="Rhea" id="RHEA:26309"/>
        <dbReference type="ChEBI" id="CHEBI:11173"/>
        <dbReference type="ChEBI" id="CHEBI:15377"/>
        <dbReference type="ChEBI" id="CHEBI:15378"/>
        <dbReference type="ChEBI" id="CHEBI:57287"/>
        <dbReference type="ChEBI" id="CHEBI:58897"/>
        <dbReference type="EC" id="3.1.2.28"/>
    </reaction>
</comment>
<comment type="pathway">
    <text evidence="1">Cofactor biosynthesis; phylloquinone biosynthesis.</text>
</comment>
<comment type="pathway">
    <text evidence="1">Quinol/quinone metabolism; 1,4-dihydroxy-2-naphthoate biosynthesis; 1,4-dihydroxy-2-naphthoate from chorismate: step 7/7.</text>
</comment>
<comment type="similarity">
    <text evidence="1">Belongs to the 4-hydroxybenzoyl-CoA thioesterase family. DHNA-CoA hydrolase subfamily.</text>
</comment>
<reference key="1">
    <citation type="journal article" date="2007" name="Photosyn. Res.">
        <title>Complete nucleotide sequence of the freshwater unicellular cyanobacterium Synechococcus elongatus PCC 6301 chromosome: gene content and organization.</title>
        <authorList>
            <person name="Sugita C."/>
            <person name="Ogata K."/>
            <person name="Shikata M."/>
            <person name="Jikuya H."/>
            <person name="Takano J."/>
            <person name="Furumichi M."/>
            <person name="Kanehisa M."/>
            <person name="Omata T."/>
            <person name="Sugiura M."/>
            <person name="Sugita M."/>
        </authorList>
    </citation>
    <scope>NUCLEOTIDE SEQUENCE [LARGE SCALE GENOMIC DNA]</scope>
    <source>
        <strain>ATCC 27144 / PCC 6301 / SAUG 1402/1</strain>
    </source>
</reference>
<dbReference type="EC" id="3.1.2.28" evidence="1"/>
<dbReference type="EMBL" id="AP008231">
    <property type="protein sequence ID" value="BAD80537.1"/>
    <property type="molecule type" value="Genomic_DNA"/>
</dbReference>
<dbReference type="RefSeq" id="WP_011244657.1">
    <property type="nucleotide sequence ID" value="NZ_CP085785.1"/>
</dbReference>
<dbReference type="SMR" id="Q5MZI3"/>
<dbReference type="KEGG" id="syc:syc2347_c"/>
<dbReference type="eggNOG" id="COG0824">
    <property type="taxonomic scope" value="Bacteria"/>
</dbReference>
<dbReference type="UniPathway" id="UPA00995"/>
<dbReference type="UniPathway" id="UPA01057">
    <property type="reaction ID" value="UER01033"/>
</dbReference>
<dbReference type="Proteomes" id="UP000001175">
    <property type="component" value="Chromosome"/>
</dbReference>
<dbReference type="GO" id="GO:0061522">
    <property type="term" value="F:1,4-dihydroxy-2-naphthoyl-CoA thioesterase activity"/>
    <property type="evidence" value="ECO:0007669"/>
    <property type="project" value="UniProtKB-EC"/>
</dbReference>
<dbReference type="GO" id="GO:0047617">
    <property type="term" value="F:fatty acyl-CoA hydrolase activity"/>
    <property type="evidence" value="ECO:0007669"/>
    <property type="project" value="TreeGrafter"/>
</dbReference>
<dbReference type="GO" id="GO:0042372">
    <property type="term" value="P:phylloquinone biosynthetic process"/>
    <property type="evidence" value="ECO:0007669"/>
    <property type="project" value="UniProtKB-UniRule"/>
</dbReference>
<dbReference type="CDD" id="cd00586">
    <property type="entry name" value="4HBT"/>
    <property type="match status" value="1"/>
</dbReference>
<dbReference type="Gene3D" id="3.10.129.10">
    <property type="entry name" value="Hotdog Thioesterase"/>
    <property type="match status" value="1"/>
</dbReference>
<dbReference type="HAMAP" id="MF_02101">
    <property type="entry name" value="DHNA_CoA_hydrolase"/>
    <property type="match status" value="1"/>
</dbReference>
<dbReference type="InterPro" id="IPR050563">
    <property type="entry name" value="4-hydroxybenzoyl-CoA_TE"/>
</dbReference>
<dbReference type="InterPro" id="IPR022829">
    <property type="entry name" value="DHNA_CoA_hydrolase"/>
</dbReference>
<dbReference type="InterPro" id="IPR029069">
    <property type="entry name" value="HotDog_dom_sf"/>
</dbReference>
<dbReference type="PANTHER" id="PTHR31793">
    <property type="entry name" value="4-HYDROXYBENZOYL-COA THIOESTERASE FAMILY MEMBER"/>
    <property type="match status" value="1"/>
</dbReference>
<dbReference type="PANTHER" id="PTHR31793:SF37">
    <property type="entry name" value="ACYL-COA THIOESTER HYDROLASE YBGC"/>
    <property type="match status" value="1"/>
</dbReference>
<dbReference type="Pfam" id="PF13279">
    <property type="entry name" value="4HBT_2"/>
    <property type="match status" value="1"/>
</dbReference>
<dbReference type="SUPFAM" id="SSF54637">
    <property type="entry name" value="Thioesterase/thiol ester dehydrase-isomerase"/>
    <property type="match status" value="1"/>
</dbReference>
<accession>Q5MZI3</accession>
<keyword id="KW-0378">Hydrolase</keyword>
<organism>
    <name type="scientific">Synechococcus sp. (strain ATCC 27144 / PCC 6301 / SAUG 1402/1)</name>
    <name type="common">Anacystis nidulans</name>
    <dbReference type="NCBI Taxonomy" id="269084"/>
    <lineage>
        <taxon>Bacteria</taxon>
        <taxon>Bacillati</taxon>
        <taxon>Cyanobacteriota</taxon>
        <taxon>Cyanophyceae</taxon>
        <taxon>Synechococcales</taxon>
        <taxon>Synechococcaceae</taxon>
        <taxon>Synechococcus</taxon>
    </lineage>
</organism>
<proteinExistence type="inferred from homology"/>
<protein>
    <recommendedName>
        <fullName evidence="1">1,4-dihydroxy-2-naphthoyl-CoA hydrolase</fullName>
        <shortName evidence="1">DHNA-CoA hydrolase</shortName>
        <ecNumber evidence="1">3.1.2.28</ecNumber>
    </recommendedName>
    <alternativeName>
        <fullName evidence="1">DHNA-CoA thioesterase</fullName>
    </alternativeName>
</protein>
<evidence type="ECO:0000255" key="1">
    <source>
        <dbReference type="HAMAP-Rule" id="MF_02101"/>
    </source>
</evidence>
<sequence length="136" mass="15552">MADYQFQRVIRFGDTDAAGVVYFAQLLSICHEAYEAAIAALGIELRSFFSDRGSVILPIVHAEIDYQRPTYCGDRLEIELQATALGRDRFRVDYRLSHNHQPVATAQTIHLCLESQTRQRSPLPERLQDWLQITAD</sequence>
<gene>
    <name type="ordered locus">syc2347_c</name>
</gene>